<protein>
    <recommendedName>
        <fullName>Nitrogenase iron-molybdenum cofactor biosynthesis protein NifN</fullName>
    </recommendedName>
</protein>
<dbReference type="EMBL" id="BA000012">
    <property type="protein sequence ID" value="BAB52279.1"/>
    <property type="molecule type" value="Genomic_DNA"/>
</dbReference>
<dbReference type="RefSeq" id="WP_010913612.1">
    <property type="nucleotide sequence ID" value="NC_002678.2"/>
</dbReference>
<dbReference type="SMR" id="Q98AP3"/>
<dbReference type="KEGG" id="mlo:mlr5909"/>
<dbReference type="PATRIC" id="fig|266835.9.peg.4704"/>
<dbReference type="eggNOG" id="COG2710">
    <property type="taxonomic scope" value="Bacteria"/>
</dbReference>
<dbReference type="HOGENOM" id="CLU_025876_2_0_5"/>
<dbReference type="UniPathway" id="UPA00782"/>
<dbReference type="Proteomes" id="UP000000552">
    <property type="component" value="Chromosome"/>
</dbReference>
<dbReference type="GO" id="GO:0046872">
    <property type="term" value="F:metal ion binding"/>
    <property type="evidence" value="ECO:0007669"/>
    <property type="project" value="UniProtKB-KW"/>
</dbReference>
<dbReference type="GO" id="GO:0016163">
    <property type="term" value="F:nitrogenase activity"/>
    <property type="evidence" value="ECO:0007669"/>
    <property type="project" value="InterPro"/>
</dbReference>
<dbReference type="GO" id="GO:0009399">
    <property type="term" value="P:nitrogen fixation"/>
    <property type="evidence" value="ECO:0007669"/>
    <property type="project" value="UniProtKB-KW"/>
</dbReference>
<dbReference type="GO" id="GO:0065003">
    <property type="term" value="P:protein-containing complex assembly"/>
    <property type="evidence" value="ECO:0007669"/>
    <property type="project" value="InterPro"/>
</dbReference>
<dbReference type="CDD" id="cd01966">
    <property type="entry name" value="Nitrogenase_NifN_1"/>
    <property type="match status" value="1"/>
</dbReference>
<dbReference type="Gene3D" id="6.10.250.1090">
    <property type="match status" value="1"/>
</dbReference>
<dbReference type="Gene3D" id="3.40.50.1980">
    <property type="entry name" value="Nitrogenase molybdenum iron protein domain"/>
    <property type="match status" value="3"/>
</dbReference>
<dbReference type="InterPro" id="IPR050152">
    <property type="entry name" value="ChlB/BchB/BchZ"/>
</dbReference>
<dbReference type="InterPro" id="IPR000510">
    <property type="entry name" value="Nase/OxRdtase_comp1"/>
</dbReference>
<dbReference type="InterPro" id="IPR000318">
    <property type="entry name" value="Nase_comp1_CS"/>
</dbReference>
<dbReference type="InterPro" id="IPR005975">
    <property type="entry name" value="Nase_Mo-Fe_CF"/>
</dbReference>
<dbReference type="NCBIfam" id="TIGR01285">
    <property type="entry name" value="nifN"/>
    <property type="match status" value="1"/>
</dbReference>
<dbReference type="PANTHER" id="PTHR33712">
    <property type="entry name" value="LIGHT-INDEPENDENT PROTOCHLOROPHYLLIDE REDUCTASE SUBUNIT B"/>
    <property type="match status" value="1"/>
</dbReference>
<dbReference type="PANTHER" id="PTHR33712:SF7">
    <property type="entry name" value="LIGHT-INDEPENDENT PROTOCHLOROPHYLLIDE REDUCTASE SUBUNIT B"/>
    <property type="match status" value="1"/>
</dbReference>
<dbReference type="Pfam" id="PF00148">
    <property type="entry name" value="Oxidored_nitro"/>
    <property type="match status" value="1"/>
</dbReference>
<dbReference type="SUPFAM" id="SSF53807">
    <property type="entry name" value="Helical backbone' metal receptor"/>
    <property type="match status" value="1"/>
</dbReference>
<dbReference type="PROSITE" id="PS00699">
    <property type="entry name" value="NITROGENASE_1_1"/>
    <property type="match status" value="1"/>
</dbReference>
<comment type="function">
    <text>This protein may play a role in the biosynthesis of the prosthetic group of nitrogenase (FeMo cofactor).</text>
</comment>
<comment type="pathway">
    <text>Cofactor biosynthesis; Fe-Mo cofactor biosynthesis.</text>
</comment>
<comment type="similarity">
    <text evidence="3">Belongs to the NifD/NifK/NifE/NifN family.</text>
</comment>
<proteinExistence type="inferred from homology"/>
<gene>
    <name type="primary">nifN</name>
    <name type="ordered locus">mlr5909</name>
</gene>
<keyword id="KW-0479">Metal-binding</keyword>
<keyword id="KW-0535">Nitrogen fixation</keyword>
<feature type="chain" id="PRO_0000153130" description="Nitrogenase iron-molybdenum cofactor biosynthesis protein NifN">
    <location>
        <begin position="1"/>
        <end position="460"/>
    </location>
</feature>
<feature type="region of interest" description="Disordered" evidence="2">
    <location>
        <begin position="436"/>
        <end position="460"/>
    </location>
</feature>
<feature type="compositionally biased region" description="Basic and acidic residues" evidence="2">
    <location>
        <begin position="441"/>
        <end position="453"/>
    </location>
</feature>
<feature type="binding site" evidence="1">
    <location>
        <position position="44"/>
    </location>
    <ligand>
        <name>[7Fe-Mo-9S-C-homocitryl] cluster</name>
        <dbReference type="ChEBI" id="CHEBI:30409"/>
        <note>cofactor</note>
    </ligand>
</feature>
<reference key="1">
    <citation type="journal article" date="2000" name="DNA Res.">
        <title>Complete genome structure of the nitrogen-fixing symbiotic bacterium Mesorhizobium loti.</title>
        <authorList>
            <person name="Kaneko T."/>
            <person name="Nakamura Y."/>
            <person name="Sato S."/>
            <person name="Asamizu E."/>
            <person name="Kato T."/>
            <person name="Sasamoto S."/>
            <person name="Watanabe A."/>
            <person name="Idesawa K."/>
            <person name="Ishikawa A."/>
            <person name="Kawashima K."/>
            <person name="Kimura T."/>
            <person name="Kishida Y."/>
            <person name="Kiyokawa C."/>
            <person name="Kohara M."/>
            <person name="Matsumoto M."/>
            <person name="Matsuno A."/>
            <person name="Mochizuki Y."/>
            <person name="Nakayama S."/>
            <person name="Nakazaki N."/>
            <person name="Shimpo S."/>
            <person name="Sugimoto M."/>
            <person name="Takeuchi C."/>
            <person name="Yamada M."/>
            <person name="Tabata S."/>
        </authorList>
    </citation>
    <scope>NUCLEOTIDE SEQUENCE [LARGE SCALE GENOMIC DNA]</scope>
    <source>
        <strain>LMG 29417 / CECT 9101 / MAFF 303099</strain>
    </source>
</reference>
<sequence>MVRILRKIKSAAVNPLKSSQPLGAAFAFLGVEGAMPLFHGSQGCTSFALVLFVRHFKEAIPLQTTAMDEVATILGGADHLEEAILNLKTRTKPKLIGVCTTALVETRGEDCASDIANVKLKHVEELAGTEVVLANTPDFDGAIEEGWAKAVAAMIEGITRSGERTRQPKKIAILPGCNLTVADVEHLRDMVESFGLKPVILPDVSGSLDGTVPDRWVTTTYGGTSVEEIRELGTAAQCIVIGEHMRHPAKTLHGLTGVPYAVFQSLTGLKAVDRFVSLLSAVSGAAVPDRVRRHRAQLEDALLDGHFHFGGKKIAIAAEPDQLYQLATFFTGMGCDIAAAVTTTDMSKILQKVPAEWVQIGDLGDLEALAAGADLLVTHSHGRQASRRLEIPLMRVGFPIFDRLGSQHKLTILYRGTRDLIFDVANIFQANQHAPTPEALDPFRKREMPDELRSSPLTRH</sequence>
<accession>Q98AP3</accession>
<evidence type="ECO:0000255" key="1"/>
<evidence type="ECO:0000256" key="2">
    <source>
        <dbReference type="SAM" id="MobiDB-lite"/>
    </source>
</evidence>
<evidence type="ECO:0000305" key="3"/>
<organism>
    <name type="scientific">Mesorhizobium japonicum (strain LMG 29417 / CECT 9101 / MAFF 303099)</name>
    <name type="common">Mesorhizobium loti (strain MAFF 303099)</name>
    <dbReference type="NCBI Taxonomy" id="266835"/>
    <lineage>
        <taxon>Bacteria</taxon>
        <taxon>Pseudomonadati</taxon>
        <taxon>Pseudomonadota</taxon>
        <taxon>Alphaproteobacteria</taxon>
        <taxon>Hyphomicrobiales</taxon>
        <taxon>Phyllobacteriaceae</taxon>
        <taxon>Mesorhizobium</taxon>
    </lineage>
</organism>
<name>NIFN_RHILO</name>